<dbReference type="EC" id="5.6.2.2" evidence="1"/>
<dbReference type="EMBL" id="CP001400">
    <property type="protein sequence ID" value="ACP38010.1"/>
    <property type="molecule type" value="Genomic_DNA"/>
</dbReference>
<dbReference type="RefSeq" id="WP_012711263.1">
    <property type="nucleotide sequence ID" value="NC_012588.1"/>
</dbReference>
<dbReference type="SMR" id="C3MYN1"/>
<dbReference type="KEGG" id="sia:M1425_1255"/>
<dbReference type="HOGENOM" id="CLU_006403_0_0_2"/>
<dbReference type="Proteomes" id="UP000001350">
    <property type="component" value="Chromosome"/>
</dbReference>
<dbReference type="GO" id="GO:0005524">
    <property type="term" value="F:ATP binding"/>
    <property type="evidence" value="ECO:0007669"/>
    <property type="project" value="UniProtKB-UniRule"/>
</dbReference>
<dbReference type="GO" id="GO:0003677">
    <property type="term" value="F:DNA binding"/>
    <property type="evidence" value="ECO:0007669"/>
    <property type="project" value="UniProtKB-UniRule"/>
</dbReference>
<dbReference type="GO" id="GO:0003918">
    <property type="term" value="F:DNA topoisomerase type II (double strand cut, ATP-hydrolyzing) activity"/>
    <property type="evidence" value="ECO:0007669"/>
    <property type="project" value="UniProtKB-UniRule"/>
</dbReference>
<dbReference type="GO" id="GO:0006265">
    <property type="term" value="P:DNA topological change"/>
    <property type="evidence" value="ECO:0007669"/>
    <property type="project" value="UniProtKB-UniRule"/>
</dbReference>
<dbReference type="CDD" id="cd16933">
    <property type="entry name" value="HATPase_TopVIB-like"/>
    <property type="match status" value="1"/>
</dbReference>
<dbReference type="CDD" id="cd00823">
    <property type="entry name" value="TopoIIB_Trans"/>
    <property type="match status" value="1"/>
</dbReference>
<dbReference type="FunFam" id="1.10.8.50:FF:000014">
    <property type="entry name" value="Type 2 DNA topoisomerase 6 subunit B"/>
    <property type="match status" value="1"/>
</dbReference>
<dbReference type="FunFam" id="3.30.230.10:FF:000091">
    <property type="entry name" value="Type 2 DNA topoisomerase 6 subunit B"/>
    <property type="match status" value="1"/>
</dbReference>
<dbReference type="FunFam" id="3.30.565.10:FF:000062">
    <property type="entry name" value="Type 2 DNA topoisomerase 6 subunit B"/>
    <property type="match status" value="1"/>
</dbReference>
<dbReference type="Gene3D" id="1.10.8.50">
    <property type="match status" value="1"/>
</dbReference>
<dbReference type="Gene3D" id="3.30.230.10">
    <property type="match status" value="1"/>
</dbReference>
<dbReference type="Gene3D" id="3.30.565.10">
    <property type="entry name" value="Histidine kinase-like ATPase, C-terminal domain"/>
    <property type="match status" value="1"/>
</dbReference>
<dbReference type="HAMAP" id="MF_00322">
    <property type="entry name" value="Top6B"/>
    <property type="match status" value="1"/>
</dbReference>
<dbReference type="InterPro" id="IPR036890">
    <property type="entry name" value="HATPase_C_sf"/>
</dbReference>
<dbReference type="InterPro" id="IPR020568">
    <property type="entry name" value="Ribosomal_Su5_D2-typ_SF"/>
</dbReference>
<dbReference type="InterPro" id="IPR010979">
    <property type="entry name" value="Ribosomal_uS13-like_H2TH"/>
</dbReference>
<dbReference type="InterPro" id="IPR014721">
    <property type="entry name" value="Ribsml_uS5_D2-typ_fold_subgr"/>
</dbReference>
<dbReference type="InterPro" id="IPR005734">
    <property type="entry name" value="TopoVI_B"/>
</dbReference>
<dbReference type="InterPro" id="IPR015320">
    <property type="entry name" value="TopoVI_B_transducer"/>
</dbReference>
<dbReference type="NCBIfam" id="NF003218">
    <property type="entry name" value="PRK04184.1"/>
    <property type="match status" value="1"/>
</dbReference>
<dbReference type="NCBIfam" id="TIGR01052">
    <property type="entry name" value="top6b"/>
    <property type="match status" value="1"/>
</dbReference>
<dbReference type="PANTHER" id="PTHR48444">
    <property type="entry name" value="DNA TOPOISOMERASE 6 SUBUNIT B"/>
    <property type="match status" value="1"/>
</dbReference>
<dbReference type="PANTHER" id="PTHR48444:SF1">
    <property type="entry name" value="DNA TOPOISOMERASE 6 SUBUNIT B"/>
    <property type="match status" value="1"/>
</dbReference>
<dbReference type="Pfam" id="PF02518">
    <property type="entry name" value="HATPase_c"/>
    <property type="match status" value="1"/>
</dbReference>
<dbReference type="Pfam" id="PF05833">
    <property type="entry name" value="NFACT_N"/>
    <property type="match status" value="1"/>
</dbReference>
<dbReference type="Pfam" id="PF09239">
    <property type="entry name" value="Topo-VIb_trans"/>
    <property type="match status" value="1"/>
</dbReference>
<dbReference type="PIRSF" id="PIRSF006553">
    <property type="entry name" value="TopoVI_B"/>
    <property type="match status" value="1"/>
</dbReference>
<dbReference type="SMART" id="SM00387">
    <property type="entry name" value="HATPase_c"/>
    <property type="match status" value="1"/>
</dbReference>
<dbReference type="SUPFAM" id="SSF55874">
    <property type="entry name" value="ATPase domain of HSP90 chaperone/DNA topoisomerase II/histidine kinase"/>
    <property type="match status" value="1"/>
</dbReference>
<dbReference type="SUPFAM" id="SSF54211">
    <property type="entry name" value="Ribosomal protein S5 domain 2-like"/>
    <property type="match status" value="1"/>
</dbReference>
<dbReference type="SUPFAM" id="SSF46946">
    <property type="entry name" value="S13-like H2TH domain"/>
    <property type="match status" value="1"/>
</dbReference>
<proteinExistence type="inferred from homology"/>
<comment type="function">
    <text evidence="1">Relaxes both positive and negative superturns and exhibits a strong decatenase activity.</text>
</comment>
<comment type="catalytic activity">
    <reaction evidence="1">
        <text>ATP-dependent breakage, passage and rejoining of double-stranded DNA.</text>
        <dbReference type="EC" id="5.6.2.2"/>
    </reaction>
</comment>
<comment type="subunit">
    <text evidence="1">Homodimer. Heterotetramer of two Top6A and two Top6B chains.</text>
</comment>
<comment type="similarity">
    <text evidence="1">Belongs to the TOP6B family.</text>
</comment>
<reference key="1">
    <citation type="journal article" date="2009" name="Proc. Natl. Acad. Sci. U.S.A.">
        <title>Biogeography of the Sulfolobus islandicus pan-genome.</title>
        <authorList>
            <person name="Reno M.L."/>
            <person name="Held N.L."/>
            <person name="Fields C.J."/>
            <person name="Burke P.V."/>
            <person name="Whitaker R.J."/>
        </authorList>
    </citation>
    <scope>NUCLEOTIDE SEQUENCE [LARGE SCALE GENOMIC DNA]</scope>
    <source>
        <strain>M.14.25 / Kamchatka #1</strain>
    </source>
</reference>
<keyword id="KW-0067">ATP-binding</keyword>
<keyword id="KW-0238">DNA-binding</keyword>
<keyword id="KW-0413">Isomerase</keyword>
<keyword id="KW-0547">Nucleotide-binding</keyword>
<keyword id="KW-0799">Topoisomerase</keyword>
<name>TOP6B_SACI4</name>
<sequence length="530" mass="60563">MSAKEKFTSLSPAEFFKRNPELAGFPNPARALYQTVRELIENSLDATDVHGILPNIKITIDLIDEARQIYKVNVVDNGIGIPPQEVPNAFGRVLYSSKYVNRQTRGMYGLGVKAAVLYSQMHQDKPIEIETSPANSKRIYTFKLKIDINKNEPIIVERGSVENTRGFHGTSVAISIPGDWPKAKSRIYEYIKRTYIITPYAEFIFKDPEGNVTYYPRLTNKIPKPPQEVKPHPYGVDREEIKILINNLKRDYTIKEFLVNEFQSIGDTTADKILELAGLKPNKKVKNLTEEEITRLVETFKKYEDFRSPSADSLSVIGEDLIELGLKKIFNPDFAASITRKPKAYQGHPFIVEAGVAFGGSIPVGEEPIVLRYANKIPLIYDEKSDVIWKVVEELDWKRYGIESDQYQMVVMVHLCSTKIPYKSAGKESIAEVEDIEKEIKNALMEVARKLKQYLSEKRKEQEAKKKLLAYLKYIPEVSRSLATFLASGNKELVSKYQNEISEGLFKLISKKLDLINIEEYRKVYRVDSE</sequence>
<organism>
    <name type="scientific">Saccharolobus islandicus (strain M.14.25 / Kamchatka #1)</name>
    <name type="common">Sulfolobus islandicus</name>
    <dbReference type="NCBI Taxonomy" id="427317"/>
    <lineage>
        <taxon>Archaea</taxon>
        <taxon>Thermoproteota</taxon>
        <taxon>Thermoprotei</taxon>
        <taxon>Sulfolobales</taxon>
        <taxon>Sulfolobaceae</taxon>
        <taxon>Saccharolobus</taxon>
    </lineage>
</organism>
<evidence type="ECO:0000255" key="1">
    <source>
        <dbReference type="HAMAP-Rule" id="MF_00322"/>
    </source>
</evidence>
<feature type="chain" id="PRO_1000205145" description="Type 2 DNA topoisomerase 6 subunit B">
    <location>
        <begin position="1"/>
        <end position="530"/>
    </location>
</feature>
<feature type="binding site" evidence="1">
    <location>
        <position position="42"/>
    </location>
    <ligand>
        <name>ATP</name>
        <dbReference type="ChEBI" id="CHEBI:30616"/>
    </ligand>
</feature>
<feature type="binding site" evidence="1">
    <location>
        <position position="76"/>
    </location>
    <ligand>
        <name>ATP</name>
        <dbReference type="ChEBI" id="CHEBI:30616"/>
    </ligand>
</feature>
<feature type="binding site" evidence="1">
    <location>
        <begin position="97"/>
        <end position="98"/>
    </location>
    <ligand>
        <name>ATP</name>
        <dbReference type="ChEBI" id="CHEBI:30616"/>
    </ligand>
</feature>
<feature type="binding site" evidence="1">
    <location>
        <begin position="106"/>
        <end position="113"/>
    </location>
    <ligand>
        <name>ATP</name>
        <dbReference type="ChEBI" id="CHEBI:30616"/>
    </ligand>
</feature>
<feature type="binding site" evidence="1">
    <location>
        <position position="427"/>
    </location>
    <ligand>
        <name>ATP</name>
        <dbReference type="ChEBI" id="CHEBI:30616"/>
    </ligand>
</feature>
<protein>
    <recommendedName>
        <fullName evidence="1">Type 2 DNA topoisomerase 6 subunit B</fullName>
        <ecNumber evidence="1">5.6.2.2</ecNumber>
    </recommendedName>
    <alternativeName>
        <fullName evidence="1">Type II DNA topoisomerase VI subunit B</fullName>
        <shortName evidence="1">TopoVI-B</shortName>
    </alternativeName>
</protein>
<gene>
    <name evidence="1" type="primary">top6B</name>
    <name type="ordered locus">M1425_1255</name>
</gene>
<accession>C3MYN1</accession>